<name>SYA_SHIBS</name>
<sequence length="876" mass="96062">MSKSTAEIRQAFLDFFHSKGHQVVASSSLVPHNDPTLLFTNAGMNQFKDVFLGLDKRNYSRATTSQRCVRAGGKHNDLENVGYTARHHTFFEMLGNFSFGDYFKHDAIQFAWELLTSEKWFALPKERLWVTVYESDDEAYEIWEKEVGIPRERIIRIGDNKGAPYASDNFWQMGDTGPCGPCTEIFYDHGDHIWGGPPGSPEEDGDRYIEIWNIVFMQFNRQADGTMEPLPKPSVDTGMGLERIAAVLQHVNSNYDIDLFRTLIQAVAKVTGATDLSNKSLRVIADHIRSCAFLIADGVMPSNENRGYVLRRIIRRAVRHGNMLGAKETFFYKLVGPLIDVMGSAGEDLKRQQAQVEQVLKTEEEQFARTLERGLALLDEELAKLSGDTLDGETAFRLYDTYGFPVDLTADVCRERNIKVDEAGFEAAMEEQRRRAREASGFGADYNAMIRVDSASEFKGYDHLELNGKVTALFVDGKAVDAINAGQEAVVVLDQTPFYAESGGQVGDKGELKDANFSFAVEDTQKYGQAIGHIGKLAAGSLKVGDAVQADVDEARRARIRLNHSATHLMHAALRQVLGTHVSQKGSLVNDKVLRFDFSHNEAMKPEEIRAVEDLVNAQIRRNLPIETNIMDLEAAKAKGAMALFGEKYDERVRVLSMGDFSTELCGGTHASRTGDIGLFRIISESGTAAGVRRIEAVTGEGAITTVHADSDRLSEVAHLLKGDSNNLADKVRSVLERTRQLEKELQQLKEQAAAQESANLSSKAIDVNGVKLLVSELSGVEPKMLRTMVDDLKNQLGSTIIVLATVAEGKVSLIAGVSKDVTDRVKAGELIGMVAQQVGGKGGGRPDMAQAGGTDAAALPAALASVKGWVSAKLQ</sequence>
<protein>
    <recommendedName>
        <fullName evidence="1">Alanine--tRNA ligase</fullName>
        <ecNumber evidence="1">6.1.1.7</ecNumber>
    </recommendedName>
    <alternativeName>
        <fullName evidence="1">Alanyl-tRNA synthetase</fullName>
        <shortName evidence="1">AlaRS</shortName>
    </alternativeName>
</protein>
<keyword id="KW-0007">Acetylation</keyword>
<keyword id="KW-0030">Aminoacyl-tRNA synthetase</keyword>
<keyword id="KW-0067">ATP-binding</keyword>
<keyword id="KW-0963">Cytoplasm</keyword>
<keyword id="KW-0436">Ligase</keyword>
<keyword id="KW-0479">Metal-binding</keyword>
<keyword id="KW-0547">Nucleotide-binding</keyword>
<keyword id="KW-0648">Protein biosynthesis</keyword>
<keyword id="KW-0694">RNA-binding</keyword>
<keyword id="KW-0820">tRNA-binding</keyword>
<keyword id="KW-0862">Zinc</keyword>
<feature type="chain" id="PRO_0000347797" description="Alanine--tRNA ligase">
    <location>
        <begin position="1"/>
        <end position="876"/>
    </location>
</feature>
<feature type="binding site" evidence="1">
    <location>
        <position position="564"/>
    </location>
    <ligand>
        <name>Zn(2+)</name>
        <dbReference type="ChEBI" id="CHEBI:29105"/>
    </ligand>
</feature>
<feature type="binding site" evidence="1">
    <location>
        <position position="568"/>
    </location>
    <ligand>
        <name>Zn(2+)</name>
        <dbReference type="ChEBI" id="CHEBI:29105"/>
    </ligand>
</feature>
<feature type="binding site" evidence="1">
    <location>
        <position position="666"/>
    </location>
    <ligand>
        <name>Zn(2+)</name>
        <dbReference type="ChEBI" id="CHEBI:29105"/>
    </ligand>
</feature>
<feature type="binding site" evidence="1">
    <location>
        <position position="670"/>
    </location>
    <ligand>
        <name>Zn(2+)</name>
        <dbReference type="ChEBI" id="CHEBI:29105"/>
    </ligand>
</feature>
<feature type="modified residue" description="N6-acetyllysine" evidence="1">
    <location>
        <position position="74"/>
    </location>
</feature>
<accession>Q31X62</accession>
<proteinExistence type="inferred from homology"/>
<gene>
    <name evidence="1" type="primary">alaS</name>
    <name type="ordered locus">SBO_2821</name>
</gene>
<comment type="function">
    <text evidence="1">Catalyzes the attachment of alanine to tRNA(Ala) in a two-step reaction: alanine is first activated by ATP to form Ala-AMP and then transferred to the acceptor end of tRNA(Ala). Also edits incorrectly charged Ser-tRNA(Ala) and Gly-tRNA(Ala) via its editing domain.</text>
</comment>
<comment type="catalytic activity">
    <reaction evidence="1">
        <text>tRNA(Ala) + L-alanine + ATP = L-alanyl-tRNA(Ala) + AMP + diphosphate</text>
        <dbReference type="Rhea" id="RHEA:12540"/>
        <dbReference type="Rhea" id="RHEA-COMP:9657"/>
        <dbReference type="Rhea" id="RHEA-COMP:9923"/>
        <dbReference type="ChEBI" id="CHEBI:30616"/>
        <dbReference type="ChEBI" id="CHEBI:33019"/>
        <dbReference type="ChEBI" id="CHEBI:57972"/>
        <dbReference type="ChEBI" id="CHEBI:78442"/>
        <dbReference type="ChEBI" id="CHEBI:78497"/>
        <dbReference type="ChEBI" id="CHEBI:456215"/>
        <dbReference type="EC" id="6.1.1.7"/>
    </reaction>
</comment>
<comment type="cofactor">
    <cofactor evidence="1">
        <name>Zn(2+)</name>
        <dbReference type="ChEBI" id="CHEBI:29105"/>
    </cofactor>
    <text evidence="1">Binds 1 zinc ion per subunit.</text>
</comment>
<comment type="subunit">
    <text evidence="1">Homotetramer.</text>
</comment>
<comment type="subcellular location">
    <subcellularLocation>
        <location evidence="1">Cytoplasm</location>
    </subcellularLocation>
</comment>
<comment type="domain">
    <text evidence="1">Consists of three domains; the N-terminal catalytic domain, the editing domain and the C-terminal C-Ala domain. The editing domain removes incorrectly charged amino acids, while the C-Ala domain, along with tRNA(Ala), serves as a bridge to cooperatively bring together the editing and aminoacylation centers thus stimulating deacylation of misacylated tRNAs.</text>
</comment>
<comment type="similarity">
    <text evidence="1">Belongs to the class-II aminoacyl-tRNA synthetase family.</text>
</comment>
<reference key="1">
    <citation type="journal article" date="2005" name="Nucleic Acids Res.">
        <title>Genome dynamics and diversity of Shigella species, the etiologic agents of bacillary dysentery.</title>
        <authorList>
            <person name="Yang F."/>
            <person name="Yang J."/>
            <person name="Zhang X."/>
            <person name="Chen L."/>
            <person name="Jiang Y."/>
            <person name="Yan Y."/>
            <person name="Tang X."/>
            <person name="Wang J."/>
            <person name="Xiong Z."/>
            <person name="Dong J."/>
            <person name="Xue Y."/>
            <person name="Zhu Y."/>
            <person name="Xu X."/>
            <person name="Sun L."/>
            <person name="Chen S."/>
            <person name="Nie H."/>
            <person name="Peng J."/>
            <person name="Xu J."/>
            <person name="Wang Y."/>
            <person name="Yuan Z."/>
            <person name="Wen Y."/>
            <person name="Yao Z."/>
            <person name="Shen Y."/>
            <person name="Qiang B."/>
            <person name="Hou Y."/>
            <person name="Yu J."/>
            <person name="Jin Q."/>
        </authorList>
    </citation>
    <scope>NUCLEOTIDE SEQUENCE [LARGE SCALE GENOMIC DNA]</scope>
    <source>
        <strain>Sb227</strain>
    </source>
</reference>
<organism>
    <name type="scientific">Shigella boydii serotype 4 (strain Sb227)</name>
    <dbReference type="NCBI Taxonomy" id="300268"/>
    <lineage>
        <taxon>Bacteria</taxon>
        <taxon>Pseudomonadati</taxon>
        <taxon>Pseudomonadota</taxon>
        <taxon>Gammaproteobacteria</taxon>
        <taxon>Enterobacterales</taxon>
        <taxon>Enterobacteriaceae</taxon>
        <taxon>Shigella</taxon>
    </lineage>
</organism>
<dbReference type="EC" id="6.1.1.7" evidence="1"/>
<dbReference type="EMBL" id="CP000036">
    <property type="protein sequence ID" value="ABB67346.1"/>
    <property type="molecule type" value="Genomic_DNA"/>
</dbReference>
<dbReference type="RefSeq" id="WP_000047161.1">
    <property type="nucleotide sequence ID" value="NC_007613.1"/>
</dbReference>
<dbReference type="SMR" id="Q31X62"/>
<dbReference type="KEGG" id="sbo:SBO_2821"/>
<dbReference type="HOGENOM" id="CLU_004485_1_1_6"/>
<dbReference type="Proteomes" id="UP000007067">
    <property type="component" value="Chromosome"/>
</dbReference>
<dbReference type="GO" id="GO:0005829">
    <property type="term" value="C:cytosol"/>
    <property type="evidence" value="ECO:0007669"/>
    <property type="project" value="TreeGrafter"/>
</dbReference>
<dbReference type="GO" id="GO:0004813">
    <property type="term" value="F:alanine-tRNA ligase activity"/>
    <property type="evidence" value="ECO:0007669"/>
    <property type="project" value="UniProtKB-UniRule"/>
</dbReference>
<dbReference type="GO" id="GO:0002161">
    <property type="term" value="F:aminoacyl-tRNA deacylase activity"/>
    <property type="evidence" value="ECO:0007669"/>
    <property type="project" value="TreeGrafter"/>
</dbReference>
<dbReference type="GO" id="GO:0005524">
    <property type="term" value="F:ATP binding"/>
    <property type="evidence" value="ECO:0007669"/>
    <property type="project" value="UniProtKB-UniRule"/>
</dbReference>
<dbReference type="GO" id="GO:0000049">
    <property type="term" value="F:tRNA binding"/>
    <property type="evidence" value="ECO:0007669"/>
    <property type="project" value="UniProtKB-KW"/>
</dbReference>
<dbReference type="GO" id="GO:0008270">
    <property type="term" value="F:zinc ion binding"/>
    <property type="evidence" value="ECO:0007669"/>
    <property type="project" value="UniProtKB-UniRule"/>
</dbReference>
<dbReference type="GO" id="GO:0006419">
    <property type="term" value="P:alanyl-tRNA aminoacylation"/>
    <property type="evidence" value="ECO:0007669"/>
    <property type="project" value="UniProtKB-UniRule"/>
</dbReference>
<dbReference type="GO" id="GO:0045892">
    <property type="term" value="P:negative regulation of DNA-templated transcription"/>
    <property type="evidence" value="ECO:0007669"/>
    <property type="project" value="TreeGrafter"/>
</dbReference>
<dbReference type="CDD" id="cd00673">
    <property type="entry name" value="AlaRS_core"/>
    <property type="match status" value="1"/>
</dbReference>
<dbReference type="FunFam" id="2.40.30.130:FF:000001">
    <property type="entry name" value="Alanine--tRNA ligase"/>
    <property type="match status" value="1"/>
</dbReference>
<dbReference type="FunFam" id="3.10.310.40:FF:000001">
    <property type="entry name" value="Alanine--tRNA ligase"/>
    <property type="match status" value="1"/>
</dbReference>
<dbReference type="FunFam" id="3.30.54.20:FF:000001">
    <property type="entry name" value="Alanine--tRNA ligase"/>
    <property type="match status" value="1"/>
</dbReference>
<dbReference type="FunFam" id="3.30.930.10:FF:000004">
    <property type="entry name" value="Alanine--tRNA ligase"/>
    <property type="match status" value="1"/>
</dbReference>
<dbReference type="FunFam" id="3.30.980.10:FF:000004">
    <property type="entry name" value="Alanine--tRNA ligase, cytoplasmic"/>
    <property type="match status" value="1"/>
</dbReference>
<dbReference type="Gene3D" id="2.40.30.130">
    <property type="match status" value="1"/>
</dbReference>
<dbReference type="Gene3D" id="3.10.310.40">
    <property type="match status" value="1"/>
</dbReference>
<dbReference type="Gene3D" id="3.30.54.20">
    <property type="match status" value="1"/>
</dbReference>
<dbReference type="Gene3D" id="6.10.250.550">
    <property type="match status" value="1"/>
</dbReference>
<dbReference type="Gene3D" id="3.30.930.10">
    <property type="entry name" value="Bira Bifunctional Protein, Domain 2"/>
    <property type="match status" value="1"/>
</dbReference>
<dbReference type="Gene3D" id="3.30.980.10">
    <property type="entry name" value="Threonyl-trna Synthetase, Chain A, domain 2"/>
    <property type="match status" value="1"/>
</dbReference>
<dbReference type="HAMAP" id="MF_00036_B">
    <property type="entry name" value="Ala_tRNA_synth_B"/>
    <property type="match status" value="1"/>
</dbReference>
<dbReference type="InterPro" id="IPR045864">
    <property type="entry name" value="aa-tRNA-synth_II/BPL/LPL"/>
</dbReference>
<dbReference type="InterPro" id="IPR002318">
    <property type="entry name" value="Ala-tRNA-lgiase_IIc"/>
</dbReference>
<dbReference type="InterPro" id="IPR018162">
    <property type="entry name" value="Ala-tRNA-ligase_IIc_anticod-bd"/>
</dbReference>
<dbReference type="InterPro" id="IPR018165">
    <property type="entry name" value="Ala-tRNA-synth_IIc_core"/>
</dbReference>
<dbReference type="InterPro" id="IPR018164">
    <property type="entry name" value="Ala-tRNA-synth_IIc_N"/>
</dbReference>
<dbReference type="InterPro" id="IPR050058">
    <property type="entry name" value="Ala-tRNA_ligase"/>
</dbReference>
<dbReference type="InterPro" id="IPR023033">
    <property type="entry name" value="Ala_tRNA_ligase_euk/bac"/>
</dbReference>
<dbReference type="InterPro" id="IPR003156">
    <property type="entry name" value="DHHA1_dom"/>
</dbReference>
<dbReference type="InterPro" id="IPR018163">
    <property type="entry name" value="Thr/Ala-tRNA-synth_IIc_edit"/>
</dbReference>
<dbReference type="InterPro" id="IPR009000">
    <property type="entry name" value="Transl_B-barrel_sf"/>
</dbReference>
<dbReference type="InterPro" id="IPR012947">
    <property type="entry name" value="tRNA_SAD"/>
</dbReference>
<dbReference type="NCBIfam" id="TIGR00344">
    <property type="entry name" value="alaS"/>
    <property type="match status" value="1"/>
</dbReference>
<dbReference type="PANTHER" id="PTHR11777:SF9">
    <property type="entry name" value="ALANINE--TRNA LIGASE, CYTOPLASMIC"/>
    <property type="match status" value="1"/>
</dbReference>
<dbReference type="PANTHER" id="PTHR11777">
    <property type="entry name" value="ALANYL-TRNA SYNTHETASE"/>
    <property type="match status" value="1"/>
</dbReference>
<dbReference type="Pfam" id="PF02272">
    <property type="entry name" value="DHHA1"/>
    <property type="match status" value="1"/>
</dbReference>
<dbReference type="Pfam" id="PF01411">
    <property type="entry name" value="tRNA-synt_2c"/>
    <property type="match status" value="1"/>
</dbReference>
<dbReference type="Pfam" id="PF07973">
    <property type="entry name" value="tRNA_SAD"/>
    <property type="match status" value="1"/>
</dbReference>
<dbReference type="PRINTS" id="PR00980">
    <property type="entry name" value="TRNASYNTHALA"/>
</dbReference>
<dbReference type="SMART" id="SM00863">
    <property type="entry name" value="tRNA_SAD"/>
    <property type="match status" value="1"/>
</dbReference>
<dbReference type="SUPFAM" id="SSF55681">
    <property type="entry name" value="Class II aaRS and biotin synthetases"/>
    <property type="match status" value="1"/>
</dbReference>
<dbReference type="SUPFAM" id="SSF101353">
    <property type="entry name" value="Putative anticodon-binding domain of alanyl-tRNA synthetase (AlaRS)"/>
    <property type="match status" value="1"/>
</dbReference>
<dbReference type="SUPFAM" id="SSF55186">
    <property type="entry name" value="ThrRS/AlaRS common domain"/>
    <property type="match status" value="1"/>
</dbReference>
<dbReference type="SUPFAM" id="SSF50447">
    <property type="entry name" value="Translation proteins"/>
    <property type="match status" value="1"/>
</dbReference>
<dbReference type="PROSITE" id="PS50860">
    <property type="entry name" value="AA_TRNA_LIGASE_II_ALA"/>
    <property type="match status" value="1"/>
</dbReference>
<evidence type="ECO:0000255" key="1">
    <source>
        <dbReference type="HAMAP-Rule" id="MF_00036"/>
    </source>
</evidence>